<feature type="chain" id="PRO_1000189067" description="D-aminopeptidase">
    <location>
        <begin position="1"/>
        <end position="516"/>
    </location>
</feature>
<feature type="region of interest" description="Important for specificity" evidence="1">
    <location>
        <begin position="476"/>
        <end position="486"/>
    </location>
</feature>
<feature type="active site" description="Nucleophile" evidence="1">
    <location>
        <position position="61"/>
    </location>
</feature>
<feature type="active site" description="Proton donor/acceptor" evidence="1">
    <location>
        <position position="64"/>
    </location>
</feature>
<feature type="binding site" evidence="1">
    <location>
        <position position="480"/>
    </location>
    <ligand>
        <name>substrate</name>
    </ligand>
</feature>
<protein>
    <recommendedName>
        <fullName evidence="1">D-aminopeptidase</fullName>
        <ecNumber evidence="1">3.4.11.19</ecNumber>
    </recommendedName>
</protein>
<sequence>MTLDLDALDRALDALPNLFRGPGGVAGVVKDGQVVASRAWGYADLTRRRPMETATRLPICSISKQFTCGVLLDTLGDTAAYDARVAEFLPQFEGPLPTLRQLCDNQSGLRDYWALTVLQGAEATQTFRREDALPLIARMKTGHFPPGTAYSYCNCNFRIVSEILESETGRALPDLYAERIFGPAGMRTAELTSDTRHPADEVVGYEGSDAVGFFPADNGIFWIGDAGISASLQDMLAYESWIDATRDDENSIYRRISVPPAYVCGTPASYGFGLSHETVAGVKVTGHGGALRGFRAQRFHAADERLSVMVIFNHEASAHAAASSLLAAALGHEAPKGARPEGWAGQWLDPESGLLLRVGEDAEGLTLRFATGPDRLTLGEDGVPRGAGVSLARDGAMLVMNRTSDNLTVRAEPLPVVTVADAGEIAGRYHARELEADLVIEARDGGAYAGFEGLLGEGPMERLHPVGPDVWIVTTRRSMDAPAPGDWTLQVRREGGAVTGLRLGCWLARRIDYARV</sequence>
<evidence type="ECO:0000255" key="1">
    <source>
        <dbReference type="HAMAP-Rule" id="MF_01960"/>
    </source>
</evidence>
<gene>
    <name evidence="1" type="primary">dap</name>
    <name type="ordered locus">RSKD131_3424</name>
</gene>
<name>DAP_CERSK</name>
<comment type="function">
    <text evidence="1">Hydrolyzes N-terminal residues in D-amino acid-containing peptides.</text>
</comment>
<comment type="catalytic activity">
    <reaction evidence="1">
        <text>Release of an N-terminal D-amino acid from a peptide, Xaa-|-Yaa-, in which Xaa is preferably D-Ala, D-Ser or D-Thr. D-amino acid amides and methyl esters also are hydrolyzed, as is glycine amide.</text>
        <dbReference type="EC" id="3.4.11.19"/>
    </reaction>
</comment>
<comment type="activity regulation">
    <text evidence="1">Inhibited by beta-lactam compounds such as 6-aminopenicillic acid, 7-aminocephalosporanic acid, benzylpenicillin and ampicillin. Inhibited by p-chloromercuribenzoate.</text>
</comment>
<comment type="subunit">
    <text evidence="1">Homodimer.</text>
</comment>
<comment type="similarity">
    <text evidence="1">Belongs to the peptidase S12 family.</text>
</comment>
<dbReference type="EC" id="3.4.11.19" evidence="1"/>
<dbReference type="EMBL" id="CP001151">
    <property type="protein sequence ID" value="ACM03284.1"/>
    <property type="molecule type" value="Genomic_DNA"/>
</dbReference>
<dbReference type="RefSeq" id="WP_012641007.1">
    <property type="nucleotide sequence ID" value="NC_011958.1"/>
</dbReference>
<dbReference type="SMR" id="B9KTA6"/>
<dbReference type="MEROPS" id="S12.002"/>
<dbReference type="GeneID" id="67448757"/>
<dbReference type="KEGG" id="rsk:RSKD131_3424"/>
<dbReference type="HOGENOM" id="CLU_020027_0_4_5"/>
<dbReference type="GO" id="GO:0004177">
    <property type="term" value="F:aminopeptidase activity"/>
    <property type="evidence" value="ECO:0007669"/>
    <property type="project" value="UniProtKB-UniRule"/>
</dbReference>
<dbReference type="GO" id="GO:0006508">
    <property type="term" value="P:proteolysis"/>
    <property type="evidence" value="ECO:0007669"/>
    <property type="project" value="UniProtKB-KW"/>
</dbReference>
<dbReference type="Gene3D" id="2.40.128.50">
    <property type="match status" value="2"/>
</dbReference>
<dbReference type="Gene3D" id="3.40.710.10">
    <property type="entry name" value="DD-peptidase/beta-lactamase superfamily"/>
    <property type="match status" value="1"/>
</dbReference>
<dbReference type="HAMAP" id="MF_01960">
    <property type="entry name" value="D_aminopeptidase"/>
    <property type="match status" value="1"/>
</dbReference>
<dbReference type="InterPro" id="IPR050491">
    <property type="entry name" value="Bact_CellWall_Synth/Modif"/>
</dbReference>
<dbReference type="InterPro" id="IPR001466">
    <property type="entry name" value="Beta-lactam-related"/>
</dbReference>
<dbReference type="InterPro" id="IPR012338">
    <property type="entry name" value="Beta-lactam/transpept-like"/>
</dbReference>
<dbReference type="InterPro" id="IPR027279">
    <property type="entry name" value="D_amino_pept/lipop_sf"/>
</dbReference>
<dbReference type="InterPro" id="IPR023645">
    <property type="entry name" value="DAP"/>
</dbReference>
<dbReference type="InterPro" id="IPR012856">
    <property type="entry name" value="DAP_B_dom"/>
</dbReference>
<dbReference type="NCBIfam" id="NF009622">
    <property type="entry name" value="PRK13128.1"/>
    <property type="match status" value="1"/>
</dbReference>
<dbReference type="PANTHER" id="PTHR46825:SF9">
    <property type="entry name" value="BETA-LACTAMASE-RELATED DOMAIN-CONTAINING PROTEIN"/>
    <property type="match status" value="1"/>
</dbReference>
<dbReference type="PANTHER" id="PTHR46825">
    <property type="entry name" value="D-ALANYL-D-ALANINE-CARBOXYPEPTIDASE/ENDOPEPTIDASE AMPH"/>
    <property type="match status" value="1"/>
</dbReference>
<dbReference type="Pfam" id="PF00144">
    <property type="entry name" value="Beta-lactamase"/>
    <property type="match status" value="1"/>
</dbReference>
<dbReference type="Pfam" id="PF07930">
    <property type="entry name" value="DAP_B"/>
    <property type="match status" value="1"/>
</dbReference>
<dbReference type="SUPFAM" id="SSF56601">
    <property type="entry name" value="beta-lactamase/transpeptidase-like"/>
    <property type="match status" value="1"/>
</dbReference>
<dbReference type="SUPFAM" id="SSF50886">
    <property type="entry name" value="D-aminopeptidase, middle and C-terminal domains"/>
    <property type="match status" value="2"/>
</dbReference>
<organism>
    <name type="scientific">Cereibacter sphaeroides (strain KD131 / KCTC 12085)</name>
    <name type="common">Rhodobacter sphaeroides</name>
    <dbReference type="NCBI Taxonomy" id="557760"/>
    <lineage>
        <taxon>Bacteria</taxon>
        <taxon>Pseudomonadati</taxon>
        <taxon>Pseudomonadota</taxon>
        <taxon>Alphaproteobacteria</taxon>
        <taxon>Rhodobacterales</taxon>
        <taxon>Paracoccaceae</taxon>
        <taxon>Cereibacter</taxon>
    </lineage>
</organism>
<reference key="1">
    <citation type="journal article" date="2009" name="J. Bacteriol.">
        <title>Complete genome sequence of Rhodobacter sphaeroides KD131.</title>
        <authorList>
            <person name="Lim S.-K."/>
            <person name="Kim S.J."/>
            <person name="Cha S.H."/>
            <person name="Oh Y.-K."/>
            <person name="Rhee H.-J."/>
            <person name="Kim M.-S."/>
            <person name="Lee J.K."/>
        </authorList>
    </citation>
    <scope>NUCLEOTIDE SEQUENCE [LARGE SCALE GENOMIC DNA]</scope>
    <source>
        <strain>KD131 / KCTC 12085</strain>
    </source>
</reference>
<proteinExistence type="inferred from homology"/>
<accession>B9KTA6</accession>
<keyword id="KW-0031">Aminopeptidase</keyword>
<keyword id="KW-0378">Hydrolase</keyword>
<keyword id="KW-0645">Protease</keyword>